<proteinExistence type="inferred from homology"/>
<reference key="1">
    <citation type="journal article" date="2015" name="Proc. Natl. Acad. Sci. U.S.A.">
        <title>Trichodesmium genome maintains abundant, widespread noncoding DNA in situ, despite oligotrophic lifestyle.</title>
        <authorList>
            <person name="Walworth N."/>
            <person name="Pfreundt U."/>
            <person name="Nelson W.C."/>
            <person name="Mincer T."/>
            <person name="Heidelberg J.F."/>
            <person name="Fu F."/>
            <person name="Waterbury J.B."/>
            <person name="Glavina del Rio T."/>
            <person name="Goodwin L."/>
            <person name="Kyrpides N.C."/>
            <person name="Land M.L."/>
            <person name="Woyke T."/>
            <person name="Hutchins D.A."/>
            <person name="Hess W.R."/>
            <person name="Webb E.A."/>
        </authorList>
    </citation>
    <scope>NUCLEOTIDE SEQUENCE [LARGE SCALE GENOMIC DNA]</scope>
    <source>
        <strain>IMS101</strain>
    </source>
</reference>
<keyword id="KW-0066">ATP synthesis</keyword>
<keyword id="KW-0067">ATP-binding</keyword>
<keyword id="KW-0139">CF(1)</keyword>
<keyword id="KW-0375">Hydrogen ion transport</keyword>
<keyword id="KW-0406">Ion transport</keyword>
<keyword id="KW-0472">Membrane</keyword>
<keyword id="KW-0547">Nucleotide-binding</keyword>
<keyword id="KW-0793">Thylakoid</keyword>
<keyword id="KW-1278">Translocase</keyword>
<keyword id="KW-0813">Transport</keyword>
<gene>
    <name evidence="2" type="primary">atpA</name>
    <name type="ordered locus">Tery_2199</name>
</gene>
<feature type="chain" id="PRO_0000302712" description="ATP synthase subunit alpha">
    <location>
        <begin position="1"/>
        <end position="505"/>
    </location>
</feature>
<feature type="binding site" evidence="2">
    <location>
        <begin position="170"/>
        <end position="177"/>
    </location>
    <ligand>
        <name>ATP</name>
        <dbReference type="ChEBI" id="CHEBI:30616"/>
    </ligand>
</feature>
<feature type="site" description="Required for activity" evidence="2">
    <location>
        <position position="363"/>
    </location>
</feature>
<protein>
    <recommendedName>
        <fullName evidence="2">ATP synthase subunit alpha</fullName>
        <ecNumber evidence="2">7.1.2.2</ecNumber>
    </recommendedName>
    <alternativeName>
        <fullName evidence="2">ATP synthase F1 sector subunit alpha</fullName>
    </alternativeName>
    <alternativeName>
        <fullName evidence="2">F-ATPase subunit alpha</fullName>
    </alternativeName>
</protein>
<organism>
    <name type="scientific">Trichodesmium erythraeum (strain IMS101)</name>
    <dbReference type="NCBI Taxonomy" id="203124"/>
    <lineage>
        <taxon>Bacteria</taxon>
        <taxon>Bacillati</taxon>
        <taxon>Cyanobacteriota</taxon>
        <taxon>Cyanophyceae</taxon>
        <taxon>Oscillatoriophycideae</taxon>
        <taxon>Oscillatoriales</taxon>
        <taxon>Microcoleaceae</taxon>
        <taxon>Trichodesmium</taxon>
    </lineage>
</organism>
<dbReference type="EC" id="7.1.2.2" evidence="2"/>
<dbReference type="EMBL" id="CP000393">
    <property type="protein sequence ID" value="ABG51428.1"/>
    <property type="molecule type" value="Genomic_DNA"/>
</dbReference>
<dbReference type="RefSeq" id="WP_011611797.1">
    <property type="nucleotide sequence ID" value="NC_008312.1"/>
</dbReference>
<dbReference type="SMR" id="Q112Z6"/>
<dbReference type="STRING" id="203124.Tery_2199"/>
<dbReference type="KEGG" id="ter:Tery_2199"/>
<dbReference type="eggNOG" id="COG0056">
    <property type="taxonomic scope" value="Bacteria"/>
</dbReference>
<dbReference type="HOGENOM" id="CLU_010091_2_1_3"/>
<dbReference type="OrthoDB" id="9803053at2"/>
<dbReference type="GO" id="GO:0031676">
    <property type="term" value="C:plasma membrane-derived thylakoid membrane"/>
    <property type="evidence" value="ECO:0007669"/>
    <property type="project" value="UniProtKB-SubCell"/>
</dbReference>
<dbReference type="GO" id="GO:0045259">
    <property type="term" value="C:proton-transporting ATP synthase complex"/>
    <property type="evidence" value="ECO:0007669"/>
    <property type="project" value="UniProtKB-KW"/>
</dbReference>
<dbReference type="GO" id="GO:0043531">
    <property type="term" value="F:ADP binding"/>
    <property type="evidence" value="ECO:0007669"/>
    <property type="project" value="TreeGrafter"/>
</dbReference>
<dbReference type="GO" id="GO:0005524">
    <property type="term" value="F:ATP binding"/>
    <property type="evidence" value="ECO:0007669"/>
    <property type="project" value="UniProtKB-UniRule"/>
</dbReference>
<dbReference type="GO" id="GO:0046933">
    <property type="term" value="F:proton-transporting ATP synthase activity, rotational mechanism"/>
    <property type="evidence" value="ECO:0007669"/>
    <property type="project" value="UniProtKB-UniRule"/>
</dbReference>
<dbReference type="CDD" id="cd18113">
    <property type="entry name" value="ATP-synt_F1_alpha_C"/>
    <property type="match status" value="1"/>
</dbReference>
<dbReference type="CDD" id="cd18116">
    <property type="entry name" value="ATP-synt_F1_alpha_N"/>
    <property type="match status" value="1"/>
</dbReference>
<dbReference type="CDD" id="cd01132">
    <property type="entry name" value="F1-ATPase_alpha_CD"/>
    <property type="match status" value="1"/>
</dbReference>
<dbReference type="FunFam" id="1.20.150.20:FF:000001">
    <property type="entry name" value="ATP synthase subunit alpha"/>
    <property type="match status" value="1"/>
</dbReference>
<dbReference type="FunFam" id="2.40.30.20:FF:000001">
    <property type="entry name" value="ATP synthase subunit alpha"/>
    <property type="match status" value="1"/>
</dbReference>
<dbReference type="FunFam" id="3.40.50.300:FF:000002">
    <property type="entry name" value="ATP synthase subunit alpha"/>
    <property type="match status" value="1"/>
</dbReference>
<dbReference type="Gene3D" id="2.40.30.20">
    <property type="match status" value="1"/>
</dbReference>
<dbReference type="Gene3D" id="1.20.150.20">
    <property type="entry name" value="ATP synthase alpha/beta chain, C-terminal domain"/>
    <property type="match status" value="1"/>
</dbReference>
<dbReference type="Gene3D" id="3.40.50.300">
    <property type="entry name" value="P-loop containing nucleotide triphosphate hydrolases"/>
    <property type="match status" value="1"/>
</dbReference>
<dbReference type="HAMAP" id="MF_01346">
    <property type="entry name" value="ATP_synth_alpha_bact"/>
    <property type="match status" value="1"/>
</dbReference>
<dbReference type="InterPro" id="IPR023366">
    <property type="entry name" value="ATP_synth_asu-like_sf"/>
</dbReference>
<dbReference type="InterPro" id="IPR000793">
    <property type="entry name" value="ATP_synth_asu_C"/>
</dbReference>
<dbReference type="InterPro" id="IPR038376">
    <property type="entry name" value="ATP_synth_asu_C_sf"/>
</dbReference>
<dbReference type="InterPro" id="IPR033732">
    <property type="entry name" value="ATP_synth_F1_a_nt-bd_dom"/>
</dbReference>
<dbReference type="InterPro" id="IPR005294">
    <property type="entry name" value="ATP_synth_F1_asu"/>
</dbReference>
<dbReference type="InterPro" id="IPR020003">
    <property type="entry name" value="ATPase_a/bsu_AS"/>
</dbReference>
<dbReference type="InterPro" id="IPR004100">
    <property type="entry name" value="ATPase_F1/V1/A1_a/bsu_N"/>
</dbReference>
<dbReference type="InterPro" id="IPR036121">
    <property type="entry name" value="ATPase_F1/V1/A1_a/bsu_N_sf"/>
</dbReference>
<dbReference type="InterPro" id="IPR000194">
    <property type="entry name" value="ATPase_F1/V1/A1_a/bsu_nucl-bd"/>
</dbReference>
<dbReference type="InterPro" id="IPR027417">
    <property type="entry name" value="P-loop_NTPase"/>
</dbReference>
<dbReference type="NCBIfam" id="TIGR00962">
    <property type="entry name" value="atpA"/>
    <property type="match status" value="1"/>
</dbReference>
<dbReference type="NCBIfam" id="NF009884">
    <property type="entry name" value="PRK13343.1"/>
    <property type="match status" value="1"/>
</dbReference>
<dbReference type="PANTHER" id="PTHR48082">
    <property type="entry name" value="ATP SYNTHASE SUBUNIT ALPHA, MITOCHONDRIAL"/>
    <property type="match status" value="1"/>
</dbReference>
<dbReference type="PANTHER" id="PTHR48082:SF2">
    <property type="entry name" value="ATP SYNTHASE SUBUNIT ALPHA, MITOCHONDRIAL"/>
    <property type="match status" value="1"/>
</dbReference>
<dbReference type="Pfam" id="PF00006">
    <property type="entry name" value="ATP-synt_ab"/>
    <property type="match status" value="1"/>
</dbReference>
<dbReference type="Pfam" id="PF00306">
    <property type="entry name" value="ATP-synt_ab_C"/>
    <property type="match status" value="1"/>
</dbReference>
<dbReference type="Pfam" id="PF02874">
    <property type="entry name" value="ATP-synt_ab_N"/>
    <property type="match status" value="1"/>
</dbReference>
<dbReference type="PIRSF" id="PIRSF039088">
    <property type="entry name" value="F_ATPase_subunit_alpha"/>
    <property type="match status" value="1"/>
</dbReference>
<dbReference type="SUPFAM" id="SSF47917">
    <property type="entry name" value="C-terminal domain of alpha and beta subunits of F1 ATP synthase"/>
    <property type="match status" value="1"/>
</dbReference>
<dbReference type="SUPFAM" id="SSF50615">
    <property type="entry name" value="N-terminal domain of alpha and beta subunits of F1 ATP synthase"/>
    <property type="match status" value="1"/>
</dbReference>
<dbReference type="SUPFAM" id="SSF52540">
    <property type="entry name" value="P-loop containing nucleoside triphosphate hydrolases"/>
    <property type="match status" value="1"/>
</dbReference>
<dbReference type="PROSITE" id="PS00152">
    <property type="entry name" value="ATPASE_ALPHA_BETA"/>
    <property type="match status" value="1"/>
</dbReference>
<evidence type="ECO:0000250" key="1"/>
<evidence type="ECO:0000255" key="2">
    <source>
        <dbReference type="HAMAP-Rule" id="MF_01346"/>
    </source>
</evidence>
<comment type="function">
    <text evidence="2">Produces ATP from ADP in the presence of a proton gradient across the membrane. The alpha chain is a regulatory subunit.</text>
</comment>
<comment type="catalytic activity">
    <reaction evidence="2">
        <text>ATP + H2O + 4 H(+)(in) = ADP + phosphate + 5 H(+)(out)</text>
        <dbReference type="Rhea" id="RHEA:57720"/>
        <dbReference type="ChEBI" id="CHEBI:15377"/>
        <dbReference type="ChEBI" id="CHEBI:15378"/>
        <dbReference type="ChEBI" id="CHEBI:30616"/>
        <dbReference type="ChEBI" id="CHEBI:43474"/>
        <dbReference type="ChEBI" id="CHEBI:456216"/>
        <dbReference type="EC" id="7.1.2.2"/>
    </reaction>
</comment>
<comment type="subunit">
    <text evidence="1">F-type ATPases have 2 components, CF(1) - the catalytic core - and CF(0) - the membrane proton channel. CF(1) has five subunits: alpha(3), beta(3), gamma(1), delta(1), epsilon(1). CF(0) has four main subunits: a(1), b(1), b'(1) and c(9-12) (By similarity).</text>
</comment>
<comment type="subcellular location">
    <subcellularLocation>
        <location evidence="2">Cellular thylakoid membrane</location>
        <topology evidence="2">Peripheral membrane protein</topology>
    </subcellularLocation>
</comment>
<comment type="similarity">
    <text evidence="2">Belongs to the ATPase alpha/beta chains family.</text>
</comment>
<name>ATPA_TRIEI</name>
<accession>Q112Z6</accession>
<sequence>MVSIRPDEISQIIRDQIEQYEQDVKVSNVGTVLQVGDGIARVYGLDKVMAGELVEFADGTVGIAQNLEEDNVGAVLMGEGREIQEGSAVTATGRIAQVPVGDALVGRVVDGLGRPIDGKGEMKTTDSRLLESPAPGIIDRRSVYEPMQTGITAIDSMIPIGRGQRELIIGDRQTGKTAIAIDTIINQKGEDVICVYVAIGQKASTVAQVVGTLEEKGALDYTVIVAANASDPATLQYLAPYTGATIAEYFMYKGKATLVIYDDLSKQAQAYRQVSLLLRRPPGREAYPGDVFYLHSRLLERAAKLNDKLGGGSMTALPIIETQAGDVSAYIPTNVISITDGQIFLSSDLFNAGFRPAVNAGISVSRVGSAAQTKAIKKVAGKIKLELAQFAELEAFSQFASDLDKATQNQLARGQRLREILKQPQNSPRSLPEQVAAIYSGINGYLDDIPLEKAAKFIAGLLDYLNNSKPKFGEIIKTEKVLTDEAQTLLKEGITEYKQTFLVSA</sequence>